<reference key="1">
    <citation type="journal article" date="1976" name="FEBS Lett.">
        <title>The amino acid sequence of ribonuclease St.</title>
        <authorList>
            <person name="Yoshida N."/>
            <person name="Sasaki A."/>
            <person name="Rashid M.A."/>
            <person name="Otsuka H."/>
        </authorList>
    </citation>
    <scope>PROTEIN SEQUENCE</scope>
</reference>
<reference key="2">
    <citation type="submission" date="1977-06" db="PIR data bank">
        <authorList>
            <person name="Yoshida N."/>
            <person name="Sasaki A."/>
            <person name="Rashid M.A."/>
            <person name="Otsuka H."/>
        </authorList>
    </citation>
    <scope>SEQUENCE REVISION</scope>
</reference>
<dbReference type="EC" id="4.6.1.24"/>
<dbReference type="PIR" id="A91429">
    <property type="entry name" value="NRSMTE"/>
</dbReference>
<dbReference type="SMR" id="P00650"/>
<dbReference type="GO" id="GO:0016829">
    <property type="term" value="F:lyase activity"/>
    <property type="evidence" value="ECO:0007669"/>
    <property type="project" value="UniProtKB-KW"/>
</dbReference>
<dbReference type="GO" id="GO:0046589">
    <property type="term" value="F:ribonuclease T1 activity"/>
    <property type="evidence" value="ECO:0007669"/>
    <property type="project" value="UniProtKB-EC"/>
</dbReference>
<dbReference type="GO" id="GO:0003723">
    <property type="term" value="F:RNA binding"/>
    <property type="evidence" value="ECO:0007669"/>
    <property type="project" value="InterPro"/>
</dbReference>
<dbReference type="GO" id="GO:0004521">
    <property type="term" value="F:RNA endonuclease activity"/>
    <property type="evidence" value="ECO:0007669"/>
    <property type="project" value="InterPro"/>
</dbReference>
<dbReference type="CDD" id="cd00607">
    <property type="entry name" value="RNase_Sa"/>
    <property type="match status" value="1"/>
</dbReference>
<dbReference type="Gene3D" id="3.10.450.30">
    <property type="entry name" value="Microbial ribonucleases"/>
    <property type="match status" value="1"/>
</dbReference>
<dbReference type="InterPro" id="IPR000026">
    <property type="entry name" value="N1-like"/>
</dbReference>
<dbReference type="InterPro" id="IPR016191">
    <property type="entry name" value="Ribonuclease/ribotoxin"/>
</dbReference>
<dbReference type="Pfam" id="PF00545">
    <property type="entry name" value="Ribonuclease"/>
    <property type="match status" value="1"/>
</dbReference>
<dbReference type="SUPFAM" id="SSF53933">
    <property type="entry name" value="Microbial ribonucleases"/>
    <property type="match status" value="1"/>
</dbReference>
<keyword id="KW-0903">Direct protein sequencing</keyword>
<keyword id="KW-1015">Disulfide bond</keyword>
<keyword id="KW-0255">Endonuclease</keyword>
<keyword id="KW-0378">Hydrolase</keyword>
<keyword id="KW-0456">Lyase</keyword>
<keyword id="KW-0540">Nuclease</keyword>
<evidence type="ECO:0000250" key="1"/>
<evidence type="ECO:0000269" key="2">
    <source>
    </source>
</evidence>
<evidence type="ECO:0000305" key="3"/>
<name>RNST_SACER</name>
<feature type="chain" id="PRO_0000137368" description="Guanyl-specific ribonuclease St">
    <location>
        <begin position="1"/>
        <end position="101"/>
    </location>
</feature>
<feature type="active site" description="Proton acceptor" evidence="1">
    <location>
        <position position="61"/>
    </location>
</feature>
<feature type="active site" description="Proton donor" evidence="1">
    <location>
        <position position="91"/>
    </location>
</feature>
<feature type="disulfide bond" evidence="2">
    <location>
        <begin position="4"/>
        <end position="54"/>
    </location>
</feature>
<protein>
    <recommendedName>
        <fullName>Guanyl-specific ribonuclease St</fullName>
        <shortName>RNase St</shortName>
        <ecNumber>4.6.1.24</ecNumber>
    </recommendedName>
</protein>
<comment type="catalytic activity">
    <reaction>
        <text>[RNA] containing guanosine + H2O = an [RNA fragment]-3'-guanosine-3'-phosphate + a 5'-hydroxy-ribonucleotide-3'-[RNA fragment].</text>
        <dbReference type="EC" id="4.6.1.24"/>
    </reaction>
</comment>
<comment type="similarity">
    <text evidence="3">Belongs to the ribonuclease N1/T1 family.</text>
</comment>
<accession>P00650</accession>
<sequence length="101" mass="11354">EAPCGDTSGFEQVRLADLPPEATDTYELIEKGGPYPYPEDGTVFENREGILPDCAEGYYHEYTVKTPSGDDRGARRFVVGDGGEYFYTEDHYESFRLTIVN</sequence>
<organism>
    <name type="scientific">Saccharopolyspora erythraea</name>
    <name type="common">Streptomyces erythraeus</name>
    <dbReference type="NCBI Taxonomy" id="1836"/>
    <lineage>
        <taxon>Bacteria</taxon>
        <taxon>Bacillati</taxon>
        <taxon>Actinomycetota</taxon>
        <taxon>Actinomycetes</taxon>
        <taxon>Pseudonocardiales</taxon>
        <taxon>Pseudonocardiaceae</taxon>
        <taxon>Saccharopolyspora</taxon>
    </lineage>
</organism>
<proteinExistence type="evidence at protein level"/>